<reference evidence="1" key="1">
    <citation type="submission" date="2008-07" db="UniProtKB">
        <authorList>
            <person name="Almagro L."/>
            <person name="Sabater Jara A.B."/>
            <person name="Pedreno M.A."/>
        </authorList>
    </citation>
    <scope>PROTEIN SEQUENCE</scope>
</reference>
<evidence type="ECO:0000305" key="1"/>
<name>UP03_CAPCH</name>
<proteinExistence type="evidence at protein level"/>
<feature type="chain" id="PRO_0000355608" description="Unknown protein 3">
    <location>
        <begin position="1" status="less than"/>
        <end position="8" status="greater than"/>
    </location>
</feature>
<feature type="unsure residue" description="F or M">
    <location>
        <position position="4"/>
    </location>
</feature>
<feature type="unsure residue" description="F or M">
    <location>
        <position position="6"/>
    </location>
</feature>
<feature type="non-terminal residue">
    <location>
        <position position="1"/>
    </location>
</feature>
<feature type="non-terminal residue">
    <location>
        <position position="8"/>
    </location>
</feature>
<accession>P86087</accession>
<keyword id="KW-0903">Direct protein sequencing</keyword>
<protein>
    <recommendedName>
        <fullName>Unknown protein 3</fullName>
    </recommendedName>
</protein>
<sequence>GEVFAFPR</sequence>
<organism>
    <name type="scientific">Capsicum chinense</name>
    <name type="common">Scotch bonnet</name>
    <name type="synonym">Bonnet pepper</name>
    <dbReference type="NCBI Taxonomy" id="80379"/>
    <lineage>
        <taxon>Eukaryota</taxon>
        <taxon>Viridiplantae</taxon>
        <taxon>Streptophyta</taxon>
        <taxon>Embryophyta</taxon>
        <taxon>Tracheophyta</taxon>
        <taxon>Spermatophyta</taxon>
        <taxon>Magnoliopsida</taxon>
        <taxon>eudicotyledons</taxon>
        <taxon>Gunneridae</taxon>
        <taxon>Pentapetalae</taxon>
        <taxon>asterids</taxon>
        <taxon>lamiids</taxon>
        <taxon>Solanales</taxon>
        <taxon>Solanaceae</taxon>
        <taxon>Solanoideae</taxon>
        <taxon>Capsiceae</taxon>
        <taxon>Capsicum</taxon>
    </lineage>
</organism>